<dbReference type="EMBL" id="BA000003">
    <property type="protein sequence ID" value="BAB13222.1"/>
    <property type="molecule type" value="Genomic_DNA"/>
</dbReference>
<dbReference type="RefSeq" id="NP_240336.1">
    <property type="nucleotide sequence ID" value="NC_002528.1"/>
</dbReference>
<dbReference type="RefSeq" id="WP_009874480.1">
    <property type="nucleotide sequence ID" value="NZ_AP036055.1"/>
</dbReference>
<dbReference type="SMR" id="P57595"/>
<dbReference type="STRING" id="563178.BUAP5A_522"/>
<dbReference type="EnsemblBacteria" id="BAB13222">
    <property type="protein sequence ID" value="BAB13222"/>
    <property type="gene ID" value="BAB13222"/>
</dbReference>
<dbReference type="KEGG" id="buc:BU529"/>
<dbReference type="PATRIC" id="fig|107806.10.peg.534"/>
<dbReference type="eggNOG" id="COG0048">
    <property type="taxonomic scope" value="Bacteria"/>
</dbReference>
<dbReference type="HOGENOM" id="CLU_104295_1_2_6"/>
<dbReference type="Proteomes" id="UP000001806">
    <property type="component" value="Chromosome"/>
</dbReference>
<dbReference type="GO" id="GO:0015935">
    <property type="term" value="C:small ribosomal subunit"/>
    <property type="evidence" value="ECO:0007669"/>
    <property type="project" value="InterPro"/>
</dbReference>
<dbReference type="GO" id="GO:0019843">
    <property type="term" value="F:rRNA binding"/>
    <property type="evidence" value="ECO:0007669"/>
    <property type="project" value="UniProtKB-UniRule"/>
</dbReference>
<dbReference type="GO" id="GO:0003735">
    <property type="term" value="F:structural constituent of ribosome"/>
    <property type="evidence" value="ECO:0007669"/>
    <property type="project" value="InterPro"/>
</dbReference>
<dbReference type="GO" id="GO:0000049">
    <property type="term" value="F:tRNA binding"/>
    <property type="evidence" value="ECO:0007669"/>
    <property type="project" value="UniProtKB-UniRule"/>
</dbReference>
<dbReference type="GO" id="GO:0006412">
    <property type="term" value="P:translation"/>
    <property type="evidence" value="ECO:0007669"/>
    <property type="project" value="UniProtKB-UniRule"/>
</dbReference>
<dbReference type="CDD" id="cd03368">
    <property type="entry name" value="Ribosomal_S12"/>
    <property type="match status" value="1"/>
</dbReference>
<dbReference type="FunFam" id="2.40.50.140:FF:000001">
    <property type="entry name" value="30S ribosomal protein S12"/>
    <property type="match status" value="1"/>
</dbReference>
<dbReference type="Gene3D" id="2.40.50.140">
    <property type="entry name" value="Nucleic acid-binding proteins"/>
    <property type="match status" value="1"/>
</dbReference>
<dbReference type="HAMAP" id="MF_00403_B">
    <property type="entry name" value="Ribosomal_uS12_B"/>
    <property type="match status" value="1"/>
</dbReference>
<dbReference type="InterPro" id="IPR012340">
    <property type="entry name" value="NA-bd_OB-fold"/>
</dbReference>
<dbReference type="InterPro" id="IPR006032">
    <property type="entry name" value="Ribosomal_uS12"/>
</dbReference>
<dbReference type="InterPro" id="IPR005679">
    <property type="entry name" value="Ribosomal_uS12_bac"/>
</dbReference>
<dbReference type="NCBIfam" id="TIGR00981">
    <property type="entry name" value="rpsL_bact"/>
    <property type="match status" value="1"/>
</dbReference>
<dbReference type="PANTHER" id="PTHR11652">
    <property type="entry name" value="30S RIBOSOMAL PROTEIN S12 FAMILY MEMBER"/>
    <property type="match status" value="1"/>
</dbReference>
<dbReference type="Pfam" id="PF00164">
    <property type="entry name" value="Ribosom_S12_S23"/>
    <property type="match status" value="1"/>
</dbReference>
<dbReference type="PIRSF" id="PIRSF002133">
    <property type="entry name" value="Ribosomal_S12/S23"/>
    <property type="match status" value="1"/>
</dbReference>
<dbReference type="PRINTS" id="PR01034">
    <property type="entry name" value="RIBOSOMALS12"/>
</dbReference>
<dbReference type="SUPFAM" id="SSF50249">
    <property type="entry name" value="Nucleic acid-binding proteins"/>
    <property type="match status" value="1"/>
</dbReference>
<dbReference type="PROSITE" id="PS00055">
    <property type="entry name" value="RIBOSOMAL_S12"/>
    <property type="match status" value="1"/>
</dbReference>
<evidence type="ECO:0000250" key="1"/>
<evidence type="ECO:0000255" key="2">
    <source>
        <dbReference type="HAMAP-Rule" id="MF_00403"/>
    </source>
</evidence>
<evidence type="ECO:0000305" key="3"/>
<comment type="function">
    <text evidence="2">With S4 and S5 plays an important role in translational accuracy.</text>
</comment>
<comment type="function">
    <text evidence="2">Interacts with and stabilizes bases of the 16S rRNA that are involved in tRNA selection in the A site and with the mRNA backbone. Located at the interface of the 30S and 50S subunits, it traverses the body of the 30S subunit contacting proteins on the other side and probably holding the rRNA structure together. The combined cluster of proteins S8, S12 and S17 appears to hold together the shoulder and platform of the 30S subunit.</text>
</comment>
<comment type="subunit">
    <text evidence="2">Part of the 30S ribosomal subunit. Contacts proteins S8 and S17. May interact with IF1 in the 30S initiation complex.</text>
</comment>
<comment type="similarity">
    <text evidence="2">Belongs to the universal ribosomal protein uS12 family.</text>
</comment>
<keyword id="KW-0488">Methylation</keyword>
<keyword id="KW-1185">Reference proteome</keyword>
<keyword id="KW-0687">Ribonucleoprotein</keyword>
<keyword id="KW-0689">Ribosomal protein</keyword>
<keyword id="KW-0694">RNA-binding</keyword>
<keyword id="KW-0699">rRNA-binding</keyword>
<keyword id="KW-0820">tRNA-binding</keyword>
<protein>
    <recommendedName>
        <fullName evidence="2">Small ribosomal subunit protein uS12</fullName>
    </recommendedName>
    <alternativeName>
        <fullName evidence="3">30S ribosomal protein S12</fullName>
    </alternativeName>
</protein>
<proteinExistence type="inferred from homology"/>
<accession>P57595</accession>
<reference key="1">
    <citation type="journal article" date="2000" name="Nature">
        <title>Genome sequence of the endocellular bacterial symbiont of aphids Buchnera sp. APS.</title>
        <authorList>
            <person name="Shigenobu S."/>
            <person name="Watanabe H."/>
            <person name="Hattori M."/>
            <person name="Sakaki Y."/>
            <person name="Ishikawa H."/>
        </authorList>
    </citation>
    <scope>NUCLEOTIDE SEQUENCE [LARGE SCALE GENOMIC DNA]</scope>
    <source>
        <strain>APS</strain>
    </source>
</reference>
<gene>
    <name evidence="2" type="primary">rpsL</name>
    <name type="ordered locus">BU529</name>
</gene>
<sequence length="124" mass="13801">MATVNQLVRKPRVRKVIKSNVPALGKSPQKRGVCTRVYTTTPKKPNSALRKVCRVRLTNGFEVTAYIGGEGHNLQEHSVILIRGGRVKDLPGVRYHIVRGSLDCAGVKERKQGRSKYGVKKPKK</sequence>
<organism>
    <name type="scientific">Buchnera aphidicola subsp. Acyrthosiphon pisum (strain APS)</name>
    <name type="common">Acyrthosiphon pisum symbiotic bacterium</name>
    <dbReference type="NCBI Taxonomy" id="107806"/>
    <lineage>
        <taxon>Bacteria</taxon>
        <taxon>Pseudomonadati</taxon>
        <taxon>Pseudomonadota</taxon>
        <taxon>Gammaproteobacteria</taxon>
        <taxon>Enterobacterales</taxon>
        <taxon>Erwiniaceae</taxon>
        <taxon>Buchnera</taxon>
    </lineage>
</organism>
<feature type="chain" id="PRO_0000146192" description="Small ribosomal subunit protein uS12">
    <location>
        <begin position="1"/>
        <end position="124"/>
    </location>
</feature>
<feature type="modified residue" description="3-methylthioaspartic acid" evidence="1">
    <location>
        <position position="89"/>
    </location>
</feature>
<name>RS12_BUCAI</name>